<evidence type="ECO:0000250" key="1"/>
<evidence type="ECO:0000250" key="2">
    <source>
        <dbReference type="UniProtKB" id="P00157"/>
    </source>
</evidence>
<evidence type="ECO:0000255" key="3">
    <source>
        <dbReference type="PROSITE-ProRule" id="PRU00967"/>
    </source>
</evidence>
<evidence type="ECO:0000255" key="4">
    <source>
        <dbReference type="PROSITE-ProRule" id="PRU00968"/>
    </source>
</evidence>
<proteinExistence type="inferred from homology"/>
<reference key="1">
    <citation type="journal article" date="2000" name="Mol. Phylogenet. Evol.">
        <title>Phylogenetic relationships of elapid snakes based on cytochrome b mtDNA sequences.</title>
        <authorList>
            <person name="Slowinski J.B."/>
            <person name="Keogh J.S."/>
        </authorList>
    </citation>
    <scope>NUCLEOTIDE SEQUENCE [GENOMIC DNA]</scope>
</reference>
<keyword id="KW-0249">Electron transport</keyword>
<keyword id="KW-0349">Heme</keyword>
<keyword id="KW-0408">Iron</keyword>
<keyword id="KW-0472">Membrane</keyword>
<keyword id="KW-0479">Metal-binding</keyword>
<keyword id="KW-0496">Mitochondrion</keyword>
<keyword id="KW-0999">Mitochondrion inner membrane</keyword>
<keyword id="KW-0679">Respiratory chain</keyword>
<keyword id="KW-0812">Transmembrane</keyword>
<keyword id="KW-1133">Transmembrane helix</keyword>
<keyword id="KW-0813">Transport</keyword>
<keyword id="KW-0830">Ubiquinone</keyword>
<organism>
    <name type="scientific">Pseudechis australis</name>
    <name type="common">Mulga snake</name>
    <name type="synonym">King brown snake</name>
    <dbReference type="NCBI Taxonomy" id="8670"/>
    <lineage>
        <taxon>Eukaryota</taxon>
        <taxon>Metazoa</taxon>
        <taxon>Chordata</taxon>
        <taxon>Craniata</taxon>
        <taxon>Vertebrata</taxon>
        <taxon>Euteleostomi</taxon>
        <taxon>Lepidosauria</taxon>
        <taxon>Squamata</taxon>
        <taxon>Bifurcata</taxon>
        <taxon>Unidentata</taxon>
        <taxon>Episquamata</taxon>
        <taxon>Toxicofera</taxon>
        <taxon>Serpentes</taxon>
        <taxon>Colubroidea</taxon>
        <taxon>Elapidae</taxon>
        <taxon>Hydrophiinae</taxon>
        <taxon>Pseudechis</taxon>
    </lineage>
</organism>
<sequence>MPNQHTMASSNLLPVGSNISTWWNFGSMLLTCLALQTLTGFFLAIHYTANINLAFSSVTHIVRDVPYGWIMQNMHAIGASMFFICIYTHIARGLYYGLYLNKEVWLSGTALLIVLMATAFFGYVLPWGQMSFWAATVITNLLTAIPYMGPKLTTWFWGGFSINDPTLTRFFALHFILPFLIISLSSIHIMLLHNEGSNNPLGTNPDIDKIPFHPYHSYKDMFIITTMIATLFIIMSFMPNLFNDPENFSKANPLVTPQHIKPEWYFLFAYGILRSIPNKLGGTMALLMSVLILTTMPFTHTSHIRSLTFRPITQVVFWTFIATFITITWTATKPVEPPFILISQMASSMYFLFFIIHPLLGWVENKIMMINH</sequence>
<feature type="chain" id="PRO_0000061447" description="Cytochrome b">
    <location>
        <begin position="1"/>
        <end position="372"/>
    </location>
</feature>
<feature type="transmembrane region" description="Helical" evidence="2">
    <location>
        <begin position="25"/>
        <end position="45"/>
    </location>
</feature>
<feature type="transmembrane region" description="Helical" evidence="2">
    <location>
        <begin position="69"/>
        <end position="90"/>
    </location>
</feature>
<feature type="transmembrane region" description="Helical" evidence="2">
    <location>
        <begin position="105"/>
        <end position="125"/>
    </location>
</feature>
<feature type="transmembrane region" description="Helical" evidence="2">
    <location>
        <begin position="170"/>
        <end position="190"/>
    </location>
</feature>
<feature type="transmembrane region" description="Helical" evidence="2">
    <location>
        <begin position="218"/>
        <end position="238"/>
    </location>
</feature>
<feature type="transmembrane region" description="Helical" evidence="2">
    <location>
        <begin position="280"/>
        <end position="300"/>
    </location>
</feature>
<feature type="transmembrane region" description="Helical" evidence="2">
    <location>
        <begin position="312"/>
        <end position="332"/>
    </location>
</feature>
<feature type="transmembrane region" description="Helical" evidence="2">
    <location>
        <begin position="339"/>
        <end position="358"/>
    </location>
</feature>
<feature type="binding site" description="axial binding residue" evidence="2">
    <location>
        <position position="75"/>
    </location>
    <ligand>
        <name>heme b</name>
        <dbReference type="ChEBI" id="CHEBI:60344"/>
        <label>b562</label>
    </ligand>
    <ligandPart>
        <name>Fe</name>
        <dbReference type="ChEBI" id="CHEBI:18248"/>
    </ligandPart>
</feature>
<feature type="binding site" description="axial binding residue" evidence="2">
    <location>
        <position position="89"/>
    </location>
    <ligand>
        <name>heme b</name>
        <dbReference type="ChEBI" id="CHEBI:60344"/>
        <label>b566</label>
    </ligand>
    <ligandPart>
        <name>Fe</name>
        <dbReference type="ChEBI" id="CHEBI:18248"/>
    </ligandPart>
</feature>
<feature type="binding site" description="axial binding residue" evidence="2">
    <location>
        <position position="174"/>
    </location>
    <ligand>
        <name>heme b</name>
        <dbReference type="ChEBI" id="CHEBI:60344"/>
        <label>b562</label>
    </ligand>
    <ligandPart>
        <name>Fe</name>
        <dbReference type="ChEBI" id="CHEBI:18248"/>
    </ligandPart>
</feature>
<feature type="binding site" description="axial binding residue" evidence="2">
    <location>
        <position position="188"/>
    </location>
    <ligand>
        <name>heme b</name>
        <dbReference type="ChEBI" id="CHEBI:60344"/>
        <label>b566</label>
    </ligand>
    <ligandPart>
        <name>Fe</name>
        <dbReference type="ChEBI" id="CHEBI:18248"/>
    </ligandPart>
</feature>
<feature type="binding site" evidence="2">
    <location>
        <position position="193"/>
    </location>
    <ligand>
        <name>a ubiquinone</name>
        <dbReference type="ChEBI" id="CHEBI:16389"/>
    </ligand>
</feature>
<comment type="function">
    <text evidence="2">Component of the ubiquinol-cytochrome c reductase complex (complex III or cytochrome b-c1 complex) that is part of the mitochondrial respiratory chain. The b-c1 complex mediates electron transfer from ubiquinol to cytochrome c. Contributes to the generation of a proton gradient across the mitochondrial membrane that is then used for ATP synthesis.</text>
</comment>
<comment type="cofactor">
    <cofactor evidence="2">
        <name>heme b</name>
        <dbReference type="ChEBI" id="CHEBI:60344"/>
    </cofactor>
    <text evidence="2">Binds 2 heme b groups non-covalently.</text>
</comment>
<comment type="subunit">
    <text evidence="2">The cytochrome bc1 complex contains 3 respiratory subunits (MT-CYB, CYC1 and UQCRFS1), 2 core proteins (UQCRC1 and UQCRC2) and probably 6 low-molecular weight proteins.</text>
</comment>
<comment type="subcellular location">
    <subcellularLocation>
        <location evidence="2">Mitochondrion inner membrane</location>
        <topology evidence="2">Multi-pass membrane protein</topology>
    </subcellularLocation>
</comment>
<comment type="miscellaneous">
    <text evidence="1">Heme 1 (or BL or b562) is low-potential and absorbs at about 562 nm, and heme 2 (or BH or b566) is high-potential and absorbs at about 566 nm.</text>
</comment>
<comment type="similarity">
    <text evidence="3 4">Belongs to the cytochrome b family.</text>
</comment>
<comment type="caution">
    <text evidence="2">The full-length protein contains only eight transmembrane helices, not nine as predicted by bioinformatics tools.</text>
</comment>
<protein>
    <recommendedName>
        <fullName>Cytochrome b</fullName>
    </recommendedName>
    <alternativeName>
        <fullName>Complex III subunit 3</fullName>
    </alternativeName>
    <alternativeName>
        <fullName>Complex III subunit III</fullName>
    </alternativeName>
    <alternativeName>
        <fullName>Cytochrome b-c1 complex subunit 3</fullName>
    </alternativeName>
    <alternativeName>
        <fullName>Ubiquinol-cytochrome-c reductase complex cytochrome b subunit</fullName>
    </alternativeName>
</protein>
<name>CYB_PSEAU</name>
<dbReference type="EMBL" id="AF217824">
    <property type="protein sequence ID" value="AAF37243.1"/>
    <property type="molecule type" value="Genomic_DNA"/>
</dbReference>
<dbReference type="SMR" id="Q9MLK4"/>
<dbReference type="GO" id="GO:0005743">
    <property type="term" value="C:mitochondrial inner membrane"/>
    <property type="evidence" value="ECO:0007669"/>
    <property type="project" value="UniProtKB-SubCell"/>
</dbReference>
<dbReference type="GO" id="GO:0045275">
    <property type="term" value="C:respiratory chain complex III"/>
    <property type="evidence" value="ECO:0007669"/>
    <property type="project" value="InterPro"/>
</dbReference>
<dbReference type="GO" id="GO:0046872">
    <property type="term" value="F:metal ion binding"/>
    <property type="evidence" value="ECO:0007669"/>
    <property type="project" value="UniProtKB-KW"/>
</dbReference>
<dbReference type="GO" id="GO:0008121">
    <property type="term" value="F:ubiquinol-cytochrome-c reductase activity"/>
    <property type="evidence" value="ECO:0007669"/>
    <property type="project" value="InterPro"/>
</dbReference>
<dbReference type="GO" id="GO:0006122">
    <property type="term" value="P:mitochondrial electron transport, ubiquinol to cytochrome c"/>
    <property type="evidence" value="ECO:0007669"/>
    <property type="project" value="TreeGrafter"/>
</dbReference>
<dbReference type="CDD" id="cd00290">
    <property type="entry name" value="cytochrome_b_C"/>
    <property type="match status" value="1"/>
</dbReference>
<dbReference type="CDD" id="cd00284">
    <property type="entry name" value="Cytochrome_b_N"/>
    <property type="match status" value="1"/>
</dbReference>
<dbReference type="Gene3D" id="1.20.810.10">
    <property type="entry name" value="Cytochrome Bc1 Complex, Chain C"/>
    <property type="match status" value="1"/>
</dbReference>
<dbReference type="InterPro" id="IPR005798">
    <property type="entry name" value="Cyt_b/b6_C"/>
</dbReference>
<dbReference type="InterPro" id="IPR036150">
    <property type="entry name" value="Cyt_b/b6_C_sf"/>
</dbReference>
<dbReference type="InterPro" id="IPR005797">
    <property type="entry name" value="Cyt_b/b6_N"/>
</dbReference>
<dbReference type="InterPro" id="IPR027387">
    <property type="entry name" value="Cytb/b6-like_sf"/>
</dbReference>
<dbReference type="InterPro" id="IPR030689">
    <property type="entry name" value="Cytochrome_b"/>
</dbReference>
<dbReference type="InterPro" id="IPR048260">
    <property type="entry name" value="Cytochrome_b_C_euk/bac"/>
</dbReference>
<dbReference type="InterPro" id="IPR048259">
    <property type="entry name" value="Cytochrome_b_N_euk/bac"/>
</dbReference>
<dbReference type="InterPro" id="IPR016174">
    <property type="entry name" value="Di-haem_cyt_TM"/>
</dbReference>
<dbReference type="PANTHER" id="PTHR19271">
    <property type="entry name" value="CYTOCHROME B"/>
    <property type="match status" value="1"/>
</dbReference>
<dbReference type="PANTHER" id="PTHR19271:SF16">
    <property type="entry name" value="CYTOCHROME B"/>
    <property type="match status" value="1"/>
</dbReference>
<dbReference type="Pfam" id="PF00032">
    <property type="entry name" value="Cytochrom_B_C"/>
    <property type="match status" value="1"/>
</dbReference>
<dbReference type="Pfam" id="PF00033">
    <property type="entry name" value="Cytochrome_B"/>
    <property type="match status" value="1"/>
</dbReference>
<dbReference type="PIRSF" id="PIRSF038885">
    <property type="entry name" value="COB"/>
    <property type="match status" value="1"/>
</dbReference>
<dbReference type="SUPFAM" id="SSF81648">
    <property type="entry name" value="a domain/subunit of cytochrome bc1 complex (Ubiquinol-cytochrome c reductase)"/>
    <property type="match status" value="1"/>
</dbReference>
<dbReference type="SUPFAM" id="SSF81342">
    <property type="entry name" value="Transmembrane di-heme cytochromes"/>
    <property type="match status" value="1"/>
</dbReference>
<dbReference type="PROSITE" id="PS51003">
    <property type="entry name" value="CYTB_CTER"/>
    <property type="match status" value="1"/>
</dbReference>
<dbReference type="PROSITE" id="PS51002">
    <property type="entry name" value="CYTB_NTER"/>
    <property type="match status" value="1"/>
</dbReference>
<geneLocation type="mitochondrion"/>
<gene>
    <name type="primary">MT-CYB</name>
    <name type="synonym">COB</name>
    <name type="synonym">CYTB</name>
    <name type="synonym">MTCYB</name>
</gene>
<accession>Q9MLK4</accession>